<keyword id="KW-1185">Reference proteome</keyword>
<keyword id="KW-0694">RNA-binding</keyword>
<keyword id="KW-0804">Transcription</keyword>
<keyword id="KW-0805">Transcription regulation</keyword>
<protein>
    <recommendedName>
        <fullName>Regulator of rDNA transcription protein 5</fullName>
    </recommendedName>
</protein>
<evidence type="ECO:0000255" key="1">
    <source>
        <dbReference type="PROSITE-ProRule" id="PRU00176"/>
    </source>
</evidence>
<evidence type="ECO:0000256" key="2">
    <source>
        <dbReference type="SAM" id="MobiDB-lite"/>
    </source>
</evidence>
<evidence type="ECO:0000269" key="3">
    <source>
    </source>
</evidence>
<evidence type="ECO:0000269" key="4">
    <source>
    </source>
</evidence>
<evidence type="ECO:0000269" key="5">
    <source>
    </source>
</evidence>
<evidence type="ECO:0000305" key="6"/>
<accession>P43607</accession>
<accession>D6VTR3</accession>
<name>RRT5_YEAST</name>
<comment type="function">
    <text evidence="4">May be involved in the modulation of rDNA transcription.</text>
</comment>
<comment type="induction">
    <text evidence="5">Specifically expressed during sporulation.</text>
</comment>
<comment type="miscellaneous">
    <text evidence="3">Present with 51100 molecules/cell in log phase SD medium.</text>
</comment>
<comment type="similarity">
    <text evidence="6">Belongs to the RRT5 family.</text>
</comment>
<feature type="chain" id="PRO_0000082029" description="Regulator of rDNA transcription protein 5">
    <location>
        <begin position="1"/>
        <end position="289"/>
    </location>
</feature>
<feature type="domain" description="RRM" evidence="1">
    <location>
        <begin position="18"/>
        <end position="105"/>
    </location>
</feature>
<feature type="region of interest" description="Disordered" evidence="2">
    <location>
        <begin position="235"/>
        <end position="289"/>
    </location>
</feature>
<feature type="compositionally biased region" description="Pro residues" evidence="2">
    <location>
        <begin position="239"/>
        <end position="255"/>
    </location>
</feature>
<feature type="compositionally biased region" description="Polar residues" evidence="2">
    <location>
        <begin position="279"/>
        <end position="289"/>
    </location>
</feature>
<dbReference type="EMBL" id="D50617">
    <property type="protein sequence ID" value="BAA09271.1"/>
    <property type="molecule type" value="Genomic_DNA"/>
</dbReference>
<dbReference type="EMBL" id="BK006940">
    <property type="protein sequence ID" value="DAA12473.1"/>
    <property type="molecule type" value="Genomic_DNA"/>
</dbReference>
<dbReference type="PIR" id="S56287">
    <property type="entry name" value="S56287"/>
</dbReference>
<dbReference type="RefSeq" id="NP_116689.1">
    <property type="nucleotide sequence ID" value="NM_001179997.1"/>
</dbReference>
<dbReference type="BioGRID" id="31188">
    <property type="interactions" value="31"/>
</dbReference>
<dbReference type="DIP" id="DIP-1808N"/>
<dbReference type="FunCoup" id="P43607">
    <property type="interactions" value="265"/>
</dbReference>
<dbReference type="IntAct" id="P43607">
    <property type="interactions" value="1"/>
</dbReference>
<dbReference type="MINT" id="P43607"/>
<dbReference type="STRING" id="4932.YFR032C"/>
<dbReference type="PaxDb" id="4932-YFR032C"/>
<dbReference type="PeptideAtlas" id="P43607"/>
<dbReference type="EnsemblFungi" id="YFR032C_mRNA">
    <property type="protein sequence ID" value="YFR032C"/>
    <property type="gene ID" value="YFR032C"/>
</dbReference>
<dbReference type="GeneID" id="850591"/>
<dbReference type="KEGG" id="sce:YFR032C"/>
<dbReference type="AGR" id="SGD:S000001928"/>
<dbReference type="SGD" id="S000001928">
    <property type="gene designation" value="RRT5"/>
</dbReference>
<dbReference type="VEuPathDB" id="FungiDB:YFR032C"/>
<dbReference type="eggNOG" id="ENOG502RZDM">
    <property type="taxonomic scope" value="Eukaryota"/>
</dbReference>
<dbReference type="HOGENOM" id="CLU_042558_0_0_1"/>
<dbReference type="InParanoid" id="P43607"/>
<dbReference type="OMA" id="IWIFRTR"/>
<dbReference type="OrthoDB" id="439808at2759"/>
<dbReference type="BioCyc" id="YEAST:G3O-30480-MONOMER"/>
<dbReference type="BioGRID-ORCS" id="850591">
    <property type="hits" value="5 hits in 10 CRISPR screens"/>
</dbReference>
<dbReference type="PRO" id="PR:P43607"/>
<dbReference type="Proteomes" id="UP000002311">
    <property type="component" value="Chromosome VI"/>
</dbReference>
<dbReference type="RNAct" id="P43607">
    <property type="molecule type" value="protein"/>
</dbReference>
<dbReference type="GO" id="GO:0005737">
    <property type="term" value="C:cytoplasm"/>
    <property type="evidence" value="ECO:0000318"/>
    <property type="project" value="GO_Central"/>
</dbReference>
<dbReference type="GO" id="GO:0005634">
    <property type="term" value="C:nucleus"/>
    <property type="evidence" value="ECO:0000318"/>
    <property type="project" value="GO_Central"/>
</dbReference>
<dbReference type="GO" id="GO:0005628">
    <property type="term" value="C:prospore membrane"/>
    <property type="evidence" value="ECO:0007005"/>
    <property type="project" value="SGD"/>
</dbReference>
<dbReference type="GO" id="GO:1990904">
    <property type="term" value="C:ribonucleoprotein complex"/>
    <property type="evidence" value="ECO:0000318"/>
    <property type="project" value="GO_Central"/>
</dbReference>
<dbReference type="GO" id="GO:0003729">
    <property type="term" value="F:mRNA binding"/>
    <property type="evidence" value="ECO:0000318"/>
    <property type="project" value="GO_Central"/>
</dbReference>
<dbReference type="CDD" id="cd12409">
    <property type="entry name" value="RRM1_RRT5"/>
    <property type="match status" value="1"/>
</dbReference>
<dbReference type="CDD" id="cd12410">
    <property type="entry name" value="RRM2_RRT5"/>
    <property type="match status" value="1"/>
</dbReference>
<dbReference type="FunFam" id="3.30.70.330:FF:000964">
    <property type="entry name" value="Regulator of rDNA transcription protein 5"/>
    <property type="match status" value="1"/>
</dbReference>
<dbReference type="Gene3D" id="3.30.70.330">
    <property type="match status" value="1"/>
</dbReference>
<dbReference type="InterPro" id="IPR012677">
    <property type="entry name" value="Nucleotide-bd_a/b_plait_sf"/>
</dbReference>
<dbReference type="InterPro" id="IPR035979">
    <property type="entry name" value="RBD_domain_sf"/>
</dbReference>
<dbReference type="InterPro" id="IPR000504">
    <property type="entry name" value="RRM_dom"/>
</dbReference>
<dbReference type="InterPro" id="IPR034244">
    <property type="entry name" value="Rrt5_RRM1"/>
</dbReference>
<dbReference type="InterPro" id="IPR034247">
    <property type="entry name" value="Rrt5_RRM2"/>
</dbReference>
<dbReference type="InterPro" id="IPR050374">
    <property type="entry name" value="RRT5_SRSF_SR"/>
</dbReference>
<dbReference type="PANTHER" id="PTHR23003:SF54">
    <property type="entry name" value="REGULATOR OF RDNA TRANSCRIPTION PROTEIN 5"/>
    <property type="match status" value="1"/>
</dbReference>
<dbReference type="PANTHER" id="PTHR23003">
    <property type="entry name" value="RNA RECOGNITION MOTIF RRM DOMAIN CONTAINING PROTEIN"/>
    <property type="match status" value="1"/>
</dbReference>
<dbReference type="Pfam" id="PF00076">
    <property type="entry name" value="RRM_1"/>
    <property type="match status" value="1"/>
</dbReference>
<dbReference type="SMART" id="SM00360">
    <property type="entry name" value="RRM"/>
    <property type="match status" value="1"/>
</dbReference>
<dbReference type="SUPFAM" id="SSF54928">
    <property type="entry name" value="RNA-binding domain, RBD"/>
    <property type="match status" value="1"/>
</dbReference>
<dbReference type="PROSITE" id="PS50102">
    <property type="entry name" value="RRM"/>
    <property type="match status" value="1"/>
</dbReference>
<gene>
    <name type="primary">RRT5</name>
    <name type="ordered locus">YFR032C</name>
</gene>
<reference key="1">
    <citation type="journal article" date="1995" name="Nat. Genet.">
        <title>Analysis of the nucleotide sequence of chromosome VI from Saccharomyces cerevisiae.</title>
        <authorList>
            <person name="Murakami Y."/>
            <person name="Naitou M."/>
            <person name="Hagiwara H."/>
            <person name="Shibata T."/>
            <person name="Ozawa M."/>
            <person name="Sasanuma S."/>
            <person name="Sasanuma M."/>
            <person name="Tsuchiya Y."/>
            <person name="Soeda E."/>
            <person name="Yokoyama K."/>
            <person name="Yamazaki M."/>
            <person name="Tashiro H."/>
            <person name="Eki T."/>
        </authorList>
    </citation>
    <scope>NUCLEOTIDE SEQUENCE [LARGE SCALE GENOMIC DNA]</scope>
    <source>
        <strain>ATCC 204508 / S288c</strain>
    </source>
</reference>
<reference key="2">
    <citation type="journal article" date="2014" name="G3 (Bethesda)">
        <title>The reference genome sequence of Saccharomyces cerevisiae: Then and now.</title>
        <authorList>
            <person name="Engel S.R."/>
            <person name="Dietrich F.S."/>
            <person name="Fisk D.G."/>
            <person name="Binkley G."/>
            <person name="Balakrishnan R."/>
            <person name="Costanzo M.C."/>
            <person name="Dwight S.S."/>
            <person name="Hitz B.C."/>
            <person name="Karra K."/>
            <person name="Nash R.S."/>
            <person name="Weng S."/>
            <person name="Wong E.D."/>
            <person name="Lloyd P."/>
            <person name="Skrzypek M.S."/>
            <person name="Miyasato S.R."/>
            <person name="Simison M."/>
            <person name="Cherry J.M."/>
        </authorList>
    </citation>
    <scope>GENOME REANNOTATION</scope>
    <source>
        <strain>ATCC 204508 / S288c</strain>
    </source>
</reference>
<reference key="3">
    <citation type="journal article" date="1996" name="Yeast">
        <title>Fifteen open reading frames in a 30.8 kb region of the right arm of chromosome VI from Saccharomyces cerevisiae.</title>
        <authorList>
            <person name="Eki T."/>
            <person name="Naitou M."/>
            <person name="Hagiwara H."/>
            <person name="Abe M."/>
            <person name="Ozawa M."/>
            <person name="Sasanuma S."/>
            <person name="Sasanuma M."/>
            <person name="Tsuchiya Y."/>
            <person name="Shibata T."/>
            <person name="Watanabe K."/>
            <person name="Ono A."/>
            <person name="Yamazaki M."/>
            <person name="Tashiro H."/>
            <person name="Hanaoka F."/>
            <person name="Murakami Y."/>
        </authorList>
    </citation>
    <scope>NUCLEOTIDE SEQUENCE [GENOMIC DNA]</scope>
    <source>
        <strain>ATCC 204511 / S288c / AB972</strain>
    </source>
</reference>
<reference key="4">
    <citation type="journal article" date="1997" name="Yeast">
        <title>Expression profiles of transcripts from 126 open reading frames in the entire chromosome VI of Saccharomyces cerevisiae by systematic northern analyses.</title>
        <authorList>
            <person name="Naitou M."/>
            <person name="Hagiwara H."/>
            <person name="Hanaoka F."/>
            <person name="Eki T."/>
            <person name="Murakami Y."/>
        </authorList>
    </citation>
    <scope>INDUCTION</scope>
</reference>
<reference key="5">
    <citation type="journal article" date="2003" name="Nature">
        <title>Global analysis of protein expression in yeast.</title>
        <authorList>
            <person name="Ghaemmaghami S."/>
            <person name="Huh W.-K."/>
            <person name="Bower K."/>
            <person name="Howson R.W."/>
            <person name="Belle A."/>
            <person name="Dephoure N."/>
            <person name="O'Shea E.K."/>
            <person name="Weissman J.S."/>
        </authorList>
    </citation>
    <scope>LEVEL OF PROTEIN EXPRESSION [LARGE SCALE ANALYSIS]</scope>
</reference>
<reference key="6">
    <citation type="journal article" date="2009" name="Genetics">
        <title>Genetic identification of factors that modulate ribosomal DNA transcription in Saccharomyces cerevisiae.</title>
        <authorList>
            <person name="Hontz R.D."/>
            <person name="Niederer R.O."/>
            <person name="Johnson J.M."/>
            <person name="Smith J.S."/>
        </authorList>
    </citation>
    <scope>FUNCTION</scope>
</reference>
<proteinExistence type="evidence at protein level"/>
<organism>
    <name type="scientific">Saccharomyces cerevisiae (strain ATCC 204508 / S288c)</name>
    <name type="common">Baker's yeast</name>
    <dbReference type="NCBI Taxonomy" id="559292"/>
    <lineage>
        <taxon>Eukaryota</taxon>
        <taxon>Fungi</taxon>
        <taxon>Dikarya</taxon>
        <taxon>Ascomycota</taxon>
        <taxon>Saccharomycotina</taxon>
        <taxon>Saccharomycetes</taxon>
        <taxon>Saccharomycetales</taxon>
        <taxon>Saccharomycetaceae</taxon>
        <taxon>Saccharomyces</taxon>
    </lineage>
</organism>
<sequence>MTEQVNNDTTSDTTTTITTVYISNLPFTASERDLHAFLNNYGASSVLIPTQTVRRFSKRHNSNPRKPLGIAFAQFANNTLALKAIQDLNGTVFQNQKLFLKLHVPYEADSTPDTDVKKPKEKNKVKKTPETAADTVYCHDLPDDITDSEIRELFQLYSPQEIWIYRSKVYRRKCIPFAPHQITAALVTLQSETPIGDICDSVAKTATLRGKSIIVKPAYVSKIQEIKQLVKDNLTNARDPPPAALAEPAPAPAPVEPAEQVQEGQDNAETNDVPPPPASSSDRPTVAAT</sequence>